<name>CLPX_ECO81</name>
<feature type="chain" id="PRO_1000123835" description="ATP-dependent Clp protease ATP-binding subunit ClpX">
    <location>
        <begin position="1"/>
        <end position="424"/>
    </location>
</feature>
<feature type="domain" description="ClpX-type ZB" evidence="2">
    <location>
        <begin position="2"/>
        <end position="56"/>
    </location>
</feature>
<feature type="binding site" evidence="2">
    <location>
        <position position="15"/>
    </location>
    <ligand>
        <name>Zn(2+)</name>
        <dbReference type="ChEBI" id="CHEBI:29105"/>
    </ligand>
</feature>
<feature type="binding site" evidence="2">
    <location>
        <position position="18"/>
    </location>
    <ligand>
        <name>Zn(2+)</name>
        <dbReference type="ChEBI" id="CHEBI:29105"/>
    </ligand>
</feature>
<feature type="binding site" evidence="2">
    <location>
        <position position="37"/>
    </location>
    <ligand>
        <name>Zn(2+)</name>
        <dbReference type="ChEBI" id="CHEBI:29105"/>
    </ligand>
</feature>
<feature type="binding site" evidence="2">
    <location>
        <position position="40"/>
    </location>
    <ligand>
        <name>Zn(2+)</name>
        <dbReference type="ChEBI" id="CHEBI:29105"/>
    </ligand>
</feature>
<feature type="binding site" evidence="1">
    <location>
        <begin position="120"/>
        <end position="127"/>
    </location>
    <ligand>
        <name>ATP</name>
        <dbReference type="ChEBI" id="CHEBI:30616"/>
    </ligand>
</feature>
<gene>
    <name evidence="1" type="primary">clpX</name>
    <name type="ordered locus">ECED1_0462</name>
</gene>
<comment type="function">
    <text evidence="1">ATP-dependent specificity component of the Clp protease. It directs the protease to specific substrates. Can perform chaperone functions in the absence of ClpP.</text>
</comment>
<comment type="subunit">
    <text evidence="1">Component of the ClpX-ClpP complex. Forms a hexameric ring that, in the presence of ATP, binds to fourteen ClpP subunits assembled into a disk-like structure with a central cavity, resembling the structure of eukaryotic proteasomes.</text>
</comment>
<comment type="similarity">
    <text evidence="1">Belongs to the ClpX chaperone family.</text>
</comment>
<evidence type="ECO:0000255" key="1">
    <source>
        <dbReference type="HAMAP-Rule" id="MF_00175"/>
    </source>
</evidence>
<evidence type="ECO:0000255" key="2">
    <source>
        <dbReference type="PROSITE-ProRule" id="PRU01250"/>
    </source>
</evidence>
<organism>
    <name type="scientific">Escherichia coli O81 (strain ED1a)</name>
    <dbReference type="NCBI Taxonomy" id="585397"/>
    <lineage>
        <taxon>Bacteria</taxon>
        <taxon>Pseudomonadati</taxon>
        <taxon>Pseudomonadota</taxon>
        <taxon>Gammaproteobacteria</taxon>
        <taxon>Enterobacterales</taxon>
        <taxon>Enterobacteriaceae</taxon>
        <taxon>Escherichia</taxon>
    </lineage>
</organism>
<accession>B7MQF4</accession>
<dbReference type="EMBL" id="CU928162">
    <property type="protein sequence ID" value="CAR06672.1"/>
    <property type="molecule type" value="Genomic_DNA"/>
</dbReference>
<dbReference type="RefSeq" id="WP_000130305.1">
    <property type="nucleotide sequence ID" value="NC_011745.1"/>
</dbReference>
<dbReference type="SMR" id="B7MQF4"/>
<dbReference type="GeneID" id="93777016"/>
<dbReference type="KEGG" id="ecq:ECED1_0462"/>
<dbReference type="HOGENOM" id="CLU_014218_8_2_6"/>
<dbReference type="Proteomes" id="UP000000748">
    <property type="component" value="Chromosome"/>
</dbReference>
<dbReference type="GO" id="GO:0009376">
    <property type="term" value="C:HslUV protease complex"/>
    <property type="evidence" value="ECO:0007669"/>
    <property type="project" value="TreeGrafter"/>
</dbReference>
<dbReference type="GO" id="GO:0005524">
    <property type="term" value="F:ATP binding"/>
    <property type="evidence" value="ECO:0007669"/>
    <property type="project" value="UniProtKB-UniRule"/>
</dbReference>
<dbReference type="GO" id="GO:0016887">
    <property type="term" value="F:ATP hydrolysis activity"/>
    <property type="evidence" value="ECO:0007669"/>
    <property type="project" value="InterPro"/>
</dbReference>
<dbReference type="GO" id="GO:0140662">
    <property type="term" value="F:ATP-dependent protein folding chaperone"/>
    <property type="evidence" value="ECO:0007669"/>
    <property type="project" value="InterPro"/>
</dbReference>
<dbReference type="GO" id="GO:0046983">
    <property type="term" value="F:protein dimerization activity"/>
    <property type="evidence" value="ECO:0007669"/>
    <property type="project" value="InterPro"/>
</dbReference>
<dbReference type="GO" id="GO:0051082">
    <property type="term" value="F:unfolded protein binding"/>
    <property type="evidence" value="ECO:0007669"/>
    <property type="project" value="UniProtKB-UniRule"/>
</dbReference>
<dbReference type="GO" id="GO:0008270">
    <property type="term" value="F:zinc ion binding"/>
    <property type="evidence" value="ECO:0007669"/>
    <property type="project" value="InterPro"/>
</dbReference>
<dbReference type="GO" id="GO:0051301">
    <property type="term" value="P:cell division"/>
    <property type="evidence" value="ECO:0007669"/>
    <property type="project" value="TreeGrafter"/>
</dbReference>
<dbReference type="GO" id="GO:0051603">
    <property type="term" value="P:proteolysis involved in protein catabolic process"/>
    <property type="evidence" value="ECO:0007669"/>
    <property type="project" value="TreeGrafter"/>
</dbReference>
<dbReference type="CDD" id="cd19497">
    <property type="entry name" value="RecA-like_ClpX"/>
    <property type="match status" value="1"/>
</dbReference>
<dbReference type="FunFam" id="1.10.8.60:FF:000002">
    <property type="entry name" value="ATP-dependent Clp protease ATP-binding subunit ClpX"/>
    <property type="match status" value="1"/>
</dbReference>
<dbReference type="FunFam" id="3.40.50.300:FF:000005">
    <property type="entry name" value="ATP-dependent Clp protease ATP-binding subunit ClpX"/>
    <property type="match status" value="1"/>
</dbReference>
<dbReference type="Gene3D" id="1.10.8.60">
    <property type="match status" value="1"/>
</dbReference>
<dbReference type="Gene3D" id="6.20.220.10">
    <property type="entry name" value="ClpX chaperone, C4-type zinc finger domain"/>
    <property type="match status" value="1"/>
</dbReference>
<dbReference type="Gene3D" id="3.40.50.300">
    <property type="entry name" value="P-loop containing nucleotide triphosphate hydrolases"/>
    <property type="match status" value="1"/>
</dbReference>
<dbReference type="HAMAP" id="MF_00175">
    <property type="entry name" value="ClpX"/>
    <property type="match status" value="1"/>
</dbReference>
<dbReference type="InterPro" id="IPR003593">
    <property type="entry name" value="AAA+_ATPase"/>
</dbReference>
<dbReference type="InterPro" id="IPR050052">
    <property type="entry name" value="ATP-dep_Clp_protease_ClpX"/>
</dbReference>
<dbReference type="InterPro" id="IPR003959">
    <property type="entry name" value="ATPase_AAA_core"/>
</dbReference>
<dbReference type="InterPro" id="IPR019489">
    <property type="entry name" value="Clp_ATPase_C"/>
</dbReference>
<dbReference type="InterPro" id="IPR004487">
    <property type="entry name" value="Clp_protease_ATP-bd_su_ClpX"/>
</dbReference>
<dbReference type="InterPro" id="IPR046425">
    <property type="entry name" value="ClpX_bact"/>
</dbReference>
<dbReference type="InterPro" id="IPR027417">
    <property type="entry name" value="P-loop_NTPase"/>
</dbReference>
<dbReference type="InterPro" id="IPR010603">
    <property type="entry name" value="Znf_CppX_C4"/>
</dbReference>
<dbReference type="InterPro" id="IPR038366">
    <property type="entry name" value="Znf_CppX_C4_sf"/>
</dbReference>
<dbReference type="NCBIfam" id="TIGR00382">
    <property type="entry name" value="clpX"/>
    <property type="match status" value="1"/>
</dbReference>
<dbReference type="NCBIfam" id="NF003745">
    <property type="entry name" value="PRK05342.1"/>
    <property type="match status" value="1"/>
</dbReference>
<dbReference type="PANTHER" id="PTHR48102:SF7">
    <property type="entry name" value="ATP-DEPENDENT CLP PROTEASE ATP-BINDING SUBUNIT CLPX-LIKE, MITOCHONDRIAL"/>
    <property type="match status" value="1"/>
</dbReference>
<dbReference type="PANTHER" id="PTHR48102">
    <property type="entry name" value="ATP-DEPENDENT CLP PROTEASE ATP-BINDING SUBUNIT CLPX-LIKE, MITOCHONDRIAL-RELATED"/>
    <property type="match status" value="1"/>
</dbReference>
<dbReference type="Pfam" id="PF07724">
    <property type="entry name" value="AAA_2"/>
    <property type="match status" value="1"/>
</dbReference>
<dbReference type="Pfam" id="PF10431">
    <property type="entry name" value="ClpB_D2-small"/>
    <property type="match status" value="1"/>
</dbReference>
<dbReference type="Pfam" id="PF06689">
    <property type="entry name" value="zf-C4_ClpX"/>
    <property type="match status" value="1"/>
</dbReference>
<dbReference type="SMART" id="SM00382">
    <property type="entry name" value="AAA"/>
    <property type="match status" value="1"/>
</dbReference>
<dbReference type="SMART" id="SM01086">
    <property type="entry name" value="ClpB_D2-small"/>
    <property type="match status" value="1"/>
</dbReference>
<dbReference type="SMART" id="SM00994">
    <property type="entry name" value="zf-C4_ClpX"/>
    <property type="match status" value="1"/>
</dbReference>
<dbReference type="SUPFAM" id="SSF57716">
    <property type="entry name" value="Glucocorticoid receptor-like (DNA-binding domain)"/>
    <property type="match status" value="1"/>
</dbReference>
<dbReference type="SUPFAM" id="SSF52540">
    <property type="entry name" value="P-loop containing nucleoside triphosphate hydrolases"/>
    <property type="match status" value="1"/>
</dbReference>
<dbReference type="PROSITE" id="PS51902">
    <property type="entry name" value="CLPX_ZB"/>
    <property type="match status" value="1"/>
</dbReference>
<reference key="1">
    <citation type="journal article" date="2009" name="PLoS Genet.">
        <title>Organised genome dynamics in the Escherichia coli species results in highly diverse adaptive paths.</title>
        <authorList>
            <person name="Touchon M."/>
            <person name="Hoede C."/>
            <person name="Tenaillon O."/>
            <person name="Barbe V."/>
            <person name="Baeriswyl S."/>
            <person name="Bidet P."/>
            <person name="Bingen E."/>
            <person name="Bonacorsi S."/>
            <person name="Bouchier C."/>
            <person name="Bouvet O."/>
            <person name="Calteau A."/>
            <person name="Chiapello H."/>
            <person name="Clermont O."/>
            <person name="Cruveiller S."/>
            <person name="Danchin A."/>
            <person name="Diard M."/>
            <person name="Dossat C."/>
            <person name="Karoui M.E."/>
            <person name="Frapy E."/>
            <person name="Garry L."/>
            <person name="Ghigo J.M."/>
            <person name="Gilles A.M."/>
            <person name="Johnson J."/>
            <person name="Le Bouguenec C."/>
            <person name="Lescat M."/>
            <person name="Mangenot S."/>
            <person name="Martinez-Jehanne V."/>
            <person name="Matic I."/>
            <person name="Nassif X."/>
            <person name="Oztas S."/>
            <person name="Petit M.A."/>
            <person name="Pichon C."/>
            <person name="Rouy Z."/>
            <person name="Ruf C.S."/>
            <person name="Schneider D."/>
            <person name="Tourret J."/>
            <person name="Vacherie B."/>
            <person name="Vallenet D."/>
            <person name="Medigue C."/>
            <person name="Rocha E.P.C."/>
            <person name="Denamur E."/>
        </authorList>
    </citation>
    <scope>NUCLEOTIDE SEQUENCE [LARGE SCALE GENOMIC DNA]</scope>
    <source>
        <strain>ED1a</strain>
    </source>
</reference>
<protein>
    <recommendedName>
        <fullName evidence="1">ATP-dependent Clp protease ATP-binding subunit ClpX</fullName>
    </recommendedName>
</protein>
<proteinExistence type="inferred from homology"/>
<sequence length="424" mass="46356">MTDKRKDGSGKLLYCSFCGKSQHEVRKLIAGPSVYICDECVDLCNDIIREEIKEVAPHRERSALPTPHEIRNHLDDYVIGQEQAKKVLAVAVYNHYKRLRNGDTSNGVELGKSNILLIGPTGSGKTLLAETLARLLDVPFTMADATTLTEAGYVGEDVENIIQKLLQKCDYDVQKAQRGIVYIDEIDKISRKSDNPSITRDVSGEGVQQALLKLIEGTVAAVPPQGGRKHPQQEFLQVDTSKILFICGGAFAGLDKVISHRVETGSGIGFGATVKAKSDKASEGELLAQVEPEDLIKFGLIPEFIGRLPVVATLNELSEEALIQILKEPKNALTKQYQALFNLEGVDLEFRDEALDAIAKKAMARKTGARGLRSIVEAALLDTMYDLPSMEDVEKVVIDESVIDGQSKPLLIYGKPEAQQASGE</sequence>
<keyword id="KW-0067">ATP-binding</keyword>
<keyword id="KW-0143">Chaperone</keyword>
<keyword id="KW-0479">Metal-binding</keyword>
<keyword id="KW-0547">Nucleotide-binding</keyword>
<keyword id="KW-0862">Zinc</keyword>